<organism>
    <name type="scientific">Cryptococcus neoformans var. neoformans serotype D (strain B-3501A)</name>
    <name type="common">Filobasidiella neoformans</name>
    <dbReference type="NCBI Taxonomy" id="283643"/>
    <lineage>
        <taxon>Eukaryota</taxon>
        <taxon>Fungi</taxon>
        <taxon>Dikarya</taxon>
        <taxon>Basidiomycota</taxon>
        <taxon>Agaricomycotina</taxon>
        <taxon>Tremellomycetes</taxon>
        <taxon>Tremellales</taxon>
        <taxon>Cryptococcaceae</taxon>
        <taxon>Cryptococcus</taxon>
        <taxon>Cryptococcus neoformans species complex</taxon>
    </lineage>
</organism>
<dbReference type="EC" id="1.2.1.12"/>
<dbReference type="EMBL" id="AF106950">
    <property type="protein sequence ID" value="AAD29256.1"/>
    <property type="molecule type" value="Genomic_DNA"/>
</dbReference>
<dbReference type="EMBL" id="AAEY01000030">
    <property type="protein sequence ID" value="EAL20354.1"/>
    <property type="molecule type" value="Genomic_DNA"/>
</dbReference>
<dbReference type="RefSeq" id="XP_775001.1">
    <property type="nucleotide sequence ID" value="XM_769908.1"/>
</dbReference>
<dbReference type="SMR" id="P0CN75"/>
<dbReference type="EnsemblFungi" id="AAW44320">
    <property type="protein sequence ID" value="AAW44320"/>
    <property type="gene ID" value="CNF03160"/>
</dbReference>
<dbReference type="GeneID" id="4936716"/>
<dbReference type="KEGG" id="cnb:CNBF1640"/>
<dbReference type="VEuPathDB" id="FungiDB:CNBF1640"/>
<dbReference type="HOGENOM" id="CLU_030140_0_3_1"/>
<dbReference type="OrthoDB" id="1921at5206"/>
<dbReference type="UniPathway" id="UPA00109">
    <property type="reaction ID" value="UER00184"/>
</dbReference>
<dbReference type="GO" id="GO:0005829">
    <property type="term" value="C:cytosol"/>
    <property type="evidence" value="ECO:0007669"/>
    <property type="project" value="TreeGrafter"/>
</dbReference>
<dbReference type="GO" id="GO:0004365">
    <property type="term" value="F:glyceraldehyde-3-phosphate dehydrogenase (NAD+) (phosphorylating) activity"/>
    <property type="evidence" value="ECO:0007669"/>
    <property type="project" value="UniProtKB-EC"/>
</dbReference>
<dbReference type="GO" id="GO:0051287">
    <property type="term" value="F:NAD binding"/>
    <property type="evidence" value="ECO:0007669"/>
    <property type="project" value="InterPro"/>
</dbReference>
<dbReference type="GO" id="GO:0050661">
    <property type="term" value="F:NADP binding"/>
    <property type="evidence" value="ECO:0007669"/>
    <property type="project" value="InterPro"/>
</dbReference>
<dbReference type="GO" id="GO:0006006">
    <property type="term" value="P:glucose metabolic process"/>
    <property type="evidence" value="ECO:0007669"/>
    <property type="project" value="InterPro"/>
</dbReference>
<dbReference type="GO" id="GO:0006096">
    <property type="term" value="P:glycolytic process"/>
    <property type="evidence" value="ECO:0007669"/>
    <property type="project" value="UniProtKB-UniPathway"/>
</dbReference>
<dbReference type="CDD" id="cd18126">
    <property type="entry name" value="GAPDH_I_C"/>
    <property type="match status" value="1"/>
</dbReference>
<dbReference type="CDD" id="cd05214">
    <property type="entry name" value="GAPDH_I_N"/>
    <property type="match status" value="1"/>
</dbReference>
<dbReference type="FunFam" id="3.30.360.10:FF:000001">
    <property type="entry name" value="Glyceraldehyde-3-phosphate dehydrogenase"/>
    <property type="match status" value="1"/>
</dbReference>
<dbReference type="FunFam" id="3.40.50.720:FF:000020">
    <property type="entry name" value="Glyceraldehyde-3-phosphate dehydrogenase"/>
    <property type="match status" value="1"/>
</dbReference>
<dbReference type="Gene3D" id="3.30.360.10">
    <property type="entry name" value="Dihydrodipicolinate Reductase, domain 2"/>
    <property type="match status" value="1"/>
</dbReference>
<dbReference type="Gene3D" id="3.40.50.720">
    <property type="entry name" value="NAD(P)-binding Rossmann-like Domain"/>
    <property type="match status" value="1"/>
</dbReference>
<dbReference type="InterPro" id="IPR020831">
    <property type="entry name" value="GlycerAld/Erythrose_P_DH"/>
</dbReference>
<dbReference type="InterPro" id="IPR020830">
    <property type="entry name" value="GlycerAld_3-P_DH_AS"/>
</dbReference>
<dbReference type="InterPro" id="IPR020829">
    <property type="entry name" value="GlycerAld_3-P_DH_cat"/>
</dbReference>
<dbReference type="InterPro" id="IPR020828">
    <property type="entry name" value="GlycerAld_3-P_DH_NAD(P)-bd"/>
</dbReference>
<dbReference type="InterPro" id="IPR006424">
    <property type="entry name" value="Glyceraldehyde-3-P_DH_1"/>
</dbReference>
<dbReference type="InterPro" id="IPR036291">
    <property type="entry name" value="NAD(P)-bd_dom_sf"/>
</dbReference>
<dbReference type="NCBIfam" id="TIGR01534">
    <property type="entry name" value="GAPDH-I"/>
    <property type="match status" value="1"/>
</dbReference>
<dbReference type="PANTHER" id="PTHR10836">
    <property type="entry name" value="GLYCERALDEHYDE 3-PHOSPHATE DEHYDROGENASE"/>
    <property type="match status" value="1"/>
</dbReference>
<dbReference type="PANTHER" id="PTHR10836:SF76">
    <property type="entry name" value="GLYCERALDEHYDE-3-PHOSPHATE DEHYDROGENASE-RELATED"/>
    <property type="match status" value="1"/>
</dbReference>
<dbReference type="Pfam" id="PF02800">
    <property type="entry name" value="Gp_dh_C"/>
    <property type="match status" value="1"/>
</dbReference>
<dbReference type="Pfam" id="PF00044">
    <property type="entry name" value="Gp_dh_N"/>
    <property type="match status" value="1"/>
</dbReference>
<dbReference type="PIRSF" id="PIRSF000149">
    <property type="entry name" value="GAP_DH"/>
    <property type="match status" value="1"/>
</dbReference>
<dbReference type="PRINTS" id="PR00078">
    <property type="entry name" value="G3PDHDRGNASE"/>
</dbReference>
<dbReference type="SMART" id="SM00846">
    <property type="entry name" value="Gp_dh_N"/>
    <property type="match status" value="1"/>
</dbReference>
<dbReference type="SUPFAM" id="SSF55347">
    <property type="entry name" value="Glyceraldehyde-3-phosphate dehydrogenase-like, C-terminal domain"/>
    <property type="match status" value="1"/>
</dbReference>
<dbReference type="SUPFAM" id="SSF51735">
    <property type="entry name" value="NAD(P)-binding Rossmann-fold domains"/>
    <property type="match status" value="1"/>
</dbReference>
<dbReference type="PROSITE" id="PS00071">
    <property type="entry name" value="GAPDH"/>
    <property type="match status" value="1"/>
</dbReference>
<sequence>MVVKVGINGFGRIGRIVLRNAIEHGDLEVVAVNDPFIDLDYMVYMFKYDSTHGRFKGSVEVKDGKLYINNKAIAVFGEKDPANIKWGEAGAEYVVESTGVFTTTEKAGVHLKGGAKKVVISAPSADAPMFVCGVNLDAYKPEYQIVSNASCTTNCLAPLAKVIHDNFTIIEGLMTTVHATTATQKTVDGPSHKDWRGGRGAAANIIPSSTGAAKAVGKVIPSLNGKLTGMSFRVPTSDVSVVDLVCRIEKGASYEEIKNVIKKASESPELKGILGYTEDAVVSTDFIGSTESSIFDAQAGIALNANFVKLVSWYDNEYGYSRRVCDLISYIAGVDAKAQ</sequence>
<proteinExistence type="inferred from homology"/>
<keyword id="KW-0963">Cytoplasm</keyword>
<keyword id="KW-0324">Glycolysis</keyword>
<keyword id="KW-0520">NAD</keyword>
<keyword id="KW-0560">Oxidoreductase</keyword>
<comment type="catalytic activity">
    <reaction evidence="2">
        <text>D-glyceraldehyde 3-phosphate + phosphate + NAD(+) = (2R)-3-phospho-glyceroyl phosphate + NADH + H(+)</text>
        <dbReference type="Rhea" id="RHEA:10300"/>
        <dbReference type="ChEBI" id="CHEBI:15378"/>
        <dbReference type="ChEBI" id="CHEBI:43474"/>
        <dbReference type="ChEBI" id="CHEBI:57540"/>
        <dbReference type="ChEBI" id="CHEBI:57604"/>
        <dbReference type="ChEBI" id="CHEBI:57945"/>
        <dbReference type="ChEBI" id="CHEBI:59776"/>
        <dbReference type="EC" id="1.2.1.12"/>
    </reaction>
</comment>
<comment type="pathway">
    <text>Carbohydrate degradation; glycolysis; pyruvate from D-glyceraldehyde 3-phosphate: step 1/5.</text>
</comment>
<comment type="subunit">
    <text evidence="1">Homotetramer.</text>
</comment>
<comment type="subcellular location">
    <subcellularLocation>
        <location evidence="1">Cytoplasm</location>
    </subcellularLocation>
</comment>
<comment type="similarity">
    <text evidence="3">Belongs to the glyceraldehyde-3-phosphate dehydrogenase family.</text>
</comment>
<gene>
    <name type="primary">GPD</name>
    <name type="ordered locus">CNBF1640</name>
</gene>
<evidence type="ECO:0000250" key="1"/>
<evidence type="ECO:0000255" key="2">
    <source>
        <dbReference type="PROSITE-ProRule" id="PRU10009"/>
    </source>
</evidence>
<evidence type="ECO:0000305" key="3"/>
<reference key="1">
    <citation type="journal article" date="1999" name="Gene">
        <title>Characterization of the glyceraldehyde-3-phosphate gene and the use of its promoter for heterologous expression in Cryptococcus neoformans, a human pathogen.</title>
        <authorList>
            <person name="Varma A."/>
            <person name="Kwon-Chung K.J."/>
        </authorList>
    </citation>
    <scope>NUCLEOTIDE SEQUENCE [GENOMIC DNA]</scope>
    <source>
        <strain>B-3501</strain>
    </source>
</reference>
<reference key="2">
    <citation type="journal article" date="2005" name="Science">
        <title>The genome of the basidiomycetous yeast and human pathogen Cryptococcus neoformans.</title>
        <authorList>
            <person name="Loftus B.J."/>
            <person name="Fung E."/>
            <person name="Roncaglia P."/>
            <person name="Rowley D."/>
            <person name="Amedeo P."/>
            <person name="Bruno D."/>
            <person name="Vamathevan J."/>
            <person name="Miranda M."/>
            <person name="Anderson I.J."/>
            <person name="Fraser J.A."/>
            <person name="Allen J.E."/>
            <person name="Bosdet I.E."/>
            <person name="Brent M.R."/>
            <person name="Chiu R."/>
            <person name="Doering T.L."/>
            <person name="Donlin M.J."/>
            <person name="D'Souza C.A."/>
            <person name="Fox D.S."/>
            <person name="Grinberg V."/>
            <person name="Fu J."/>
            <person name="Fukushima M."/>
            <person name="Haas B.J."/>
            <person name="Huang J.C."/>
            <person name="Janbon G."/>
            <person name="Jones S.J.M."/>
            <person name="Koo H.L."/>
            <person name="Krzywinski M.I."/>
            <person name="Kwon-Chung K.J."/>
            <person name="Lengeler K.B."/>
            <person name="Maiti R."/>
            <person name="Marra M.A."/>
            <person name="Marra R.E."/>
            <person name="Mathewson C.A."/>
            <person name="Mitchell T.G."/>
            <person name="Pertea M."/>
            <person name="Riggs F.R."/>
            <person name="Salzberg S.L."/>
            <person name="Schein J.E."/>
            <person name="Shvartsbeyn A."/>
            <person name="Shin H."/>
            <person name="Shumway M."/>
            <person name="Specht C.A."/>
            <person name="Suh B.B."/>
            <person name="Tenney A."/>
            <person name="Utterback T.R."/>
            <person name="Wickes B.L."/>
            <person name="Wortman J.R."/>
            <person name="Wye N.H."/>
            <person name="Kronstad J.W."/>
            <person name="Lodge J.K."/>
            <person name="Heitman J."/>
            <person name="Davis R.W."/>
            <person name="Fraser C.M."/>
            <person name="Hyman R.W."/>
        </authorList>
    </citation>
    <scope>NUCLEOTIDE SEQUENCE [LARGE SCALE GENOMIC DNA]</scope>
    <source>
        <strain>B-3501A</strain>
    </source>
</reference>
<accession>P0CN75</accession>
<accession>Q55R25</accession>
<accession>Q5KF42</accession>
<accession>Q9Y8E9</accession>
<feature type="chain" id="PRO_0000410092" description="Glyceraldehyde-3-phosphate dehydrogenase">
    <location>
        <begin position="1"/>
        <end position="339"/>
    </location>
</feature>
<feature type="active site" description="Nucleophile" evidence="2">
    <location>
        <position position="151"/>
    </location>
</feature>
<feature type="binding site" evidence="1">
    <location>
        <begin position="12"/>
        <end position="13"/>
    </location>
    <ligand>
        <name>NAD(+)</name>
        <dbReference type="ChEBI" id="CHEBI:57540"/>
    </ligand>
</feature>
<feature type="binding site" evidence="1">
    <location>
        <position position="34"/>
    </location>
    <ligand>
        <name>NAD(+)</name>
        <dbReference type="ChEBI" id="CHEBI:57540"/>
    </ligand>
</feature>
<feature type="binding site" evidence="1">
    <location>
        <position position="79"/>
    </location>
    <ligand>
        <name>NAD(+)</name>
        <dbReference type="ChEBI" id="CHEBI:57540"/>
    </ligand>
</feature>
<feature type="binding site" evidence="1">
    <location>
        <begin position="150"/>
        <end position="152"/>
    </location>
    <ligand>
        <name>D-glyceraldehyde 3-phosphate</name>
        <dbReference type="ChEBI" id="CHEBI:59776"/>
    </ligand>
</feature>
<feature type="binding site" evidence="1">
    <location>
        <position position="181"/>
    </location>
    <ligand>
        <name>D-glyceraldehyde 3-phosphate</name>
        <dbReference type="ChEBI" id="CHEBI:59776"/>
    </ligand>
</feature>
<feature type="binding site" evidence="1">
    <location>
        <begin position="210"/>
        <end position="211"/>
    </location>
    <ligand>
        <name>D-glyceraldehyde 3-phosphate</name>
        <dbReference type="ChEBI" id="CHEBI:59776"/>
    </ligand>
</feature>
<feature type="binding site" evidence="1">
    <location>
        <position position="233"/>
    </location>
    <ligand>
        <name>D-glyceraldehyde 3-phosphate</name>
        <dbReference type="ChEBI" id="CHEBI:59776"/>
    </ligand>
</feature>
<feature type="binding site" evidence="1">
    <location>
        <position position="316"/>
    </location>
    <ligand>
        <name>NAD(+)</name>
        <dbReference type="ChEBI" id="CHEBI:57540"/>
    </ligand>
</feature>
<feature type="site" description="Activates thiol group during catalysis" evidence="1">
    <location>
        <position position="178"/>
    </location>
</feature>
<feature type="sequence variant" description="In strain: B-3501.">
    <original>G</original>
    <variation>S</variation>
    <location>
        <position position="114"/>
    </location>
</feature>
<feature type="sequence variant" description="In strain: B-3501.">
    <original>A</original>
    <variation>T</variation>
    <location>
        <position position="157"/>
    </location>
</feature>
<name>G3P_CRYNB</name>
<protein>
    <recommendedName>
        <fullName>Glyceraldehyde-3-phosphate dehydrogenase</fullName>
        <shortName>GAPDH</shortName>
        <ecNumber>1.2.1.12</ecNumber>
    </recommendedName>
</protein>